<reference key="1">
    <citation type="journal article" date="1996" name="Hereditas">
        <title>A complete mitochondrial DNA molecule of the white-handed gibbon, Hylobates lar, and comparison among individual mitochondrial genes of all hominoid genera.</title>
        <authorList>
            <person name="Arnason U."/>
            <person name="Gullberg A."/>
            <person name="Xu X."/>
        </authorList>
    </citation>
    <scope>NUCLEOTIDE SEQUENCE [GENOMIC DNA]</scope>
    <source>
        <strain>Isolate Ester</strain>
    </source>
</reference>
<organism>
    <name type="scientific">Hylobates lar</name>
    <name type="common">Lar gibbon</name>
    <name type="synonym">White-handed gibbon</name>
    <dbReference type="NCBI Taxonomy" id="9580"/>
    <lineage>
        <taxon>Eukaryota</taxon>
        <taxon>Metazoa</taxon>
        <taxon>Chordata</taxon>
        <taxon>Craniata</taxon>
        <taxon>Vertebrata</taxon>
        <taxon>Euteleostomi</taxon>
        <taxon>Mammalia</taxon>
        <taxon>Eutheria</taxon>
        <taxon>Euarchontoglires</taxon>
        <taxon>Primates</taxon>
        <taxon>Haplorrhini</taxon>
        <taxon>Catarrhini</taxon>
        <taxon>Hylobatidae</taxon>
        <taxon>Hylobates</taxon>
    </lineage>
</organism>
<accession>Q95706</accession>
<evidence type="ECO:0000250" key="1">
    <source>
        <dbReference type="UniProtKB" id="P00846"/>
    </source>
</evidence>
<evidence type="ECO:0000255" key="2"/>
<evidence type="ECO:0000305" key="3"/>
<dbReference type="EMBL" id="X99256">
    <property type="protein sequence ID" value="CAA67633.1"/>
    <property type="molecule type" value="Genomic_DNA"/>
</dbReference>
<dbReference type="PIR" id="T11838">
    <property type="entry name" value="T11838"/>
</dbReference>
<dbReference type="RefSeq" id="NP_007827.1">
    <property type="nucleotide sequence ID" value="NC_002082.1"/>
</dbReference>
<dbReference type="SMR" id="Q95706"/>
<dbReference type="GeneID" id="808459"/>
<dbReference type="CTD" id="4508"/>
<dbReference type="GO" id="GO:0005743">
    <property type="term" value="C:mitochondrial inner membrane"/>
    <property type="evidence" value="ECO:0007669"/>
    <property type="project" value="UniProtKB-SubCell"/>
</dbReference>
<dbReference type="GO" id="GO:0045259">
    <property type="term" value="C:proton-transporting ATP synthase complex"/>
    <property type="evidence" value="ECO:0000250"/>
    <property type="project" value="UniProtKB"/>
</dbReference>
<dbReference type="GO" id="GO:0015252">
    <property type="term" value="F:proton channel activity"/>
    <property type="evidence" value="ECO:0000250"/>
    <property type="project" value="UniProtKB"/>
</dbReference>
<dbReference type="GO" id="GO:0046933">
    <property type="term" value="F:proton-transporting ATP synthase activity, rotational mechanism"/>
    <property type="evidence" value="ECO:0007669"/>
    <property type="project" value="TreeGrafter"/>
</dbReference>
<dbReference type="GO" id="GO:0015986">
    <property type="term" value="P:proton motive force-driven ATP synthesis"/>
    <property type="evidence" value="ECO:0000250"/>
    <property type="project" value="UniProtKB"/>
</dbReference>
<dbReference type="GO" id="GO:1902600">
    <property type="term" value="P:proton transmembrane transport"/>
    <property type="evidence" value="ECO:0000250"/>
    <property type="project" value="UniProtKB"/>
</dbReference>
<dbReference type="CDD" id="cd00310">
    <property type="entry name" value="ATP-synt_Fo_a_6"/>
    <property type="match status" value="1"/>
</dbReference>
<dbReference type="FunFam" id="1.20.120.220:FF:000004">
    <property type="entry name" value="ATP synthase subunit a"/>
    <property type="match status" value="1"/>
</dbReference>
<dbReference type="Gene3D" id="1.20.120.220">
    <property type="entry name" value="ATP synthase, F0 complex, subunit A"/>
    <property type="match status" value="1"/>
</dbReference>
<dbReference type="InterPro" id="IPR000568">
    <property type="entry name" value="ATP_synth_F0_asu"/>
</dbReference>
<dbReference type="InterPro" id="IPR023011">
    <property type="entry name" value="ATP_synth_F0_asu_AS"/>
</dbReference>
<dbReference type="InterPro" id="IPR045083">
    <property type="entry name" value="ATP_synth_F0_asu_bact/mt"/>
</dbReference>
<dbReference type="InterPro" id="IPR035908">
    <property type="entry name" value="F0_ATP_A_sf"/>
</dbReference>
<dbReference type="NCBIfam" id="TIGR01131">
    <property type="entry name" value="ATP_synt_6_or_A"/>
    <property type="match status" value="1"/>
</dbReference>
<dbReference type="PANTHER" id="PTHR11410">
    <property type="entry name" value="ATP SYNTHASE SUBUNIT A"/>
    <property type="match status" value="1"/>
</dbReference>
<dbReference type="PANTHER" id="PTHR11410:SF0">
    <property type="entry name" value="ATP SYNTHASE SUBUNIT A"/>
    <property type="match status" value="1"/>
</dbReference>
<dbReference type="Pfam" id="PF00119">
    <property type="entry name" value="ATP-synt_A"/>
    <property type="match status" value="1"/>
</dbReference>
<dbReference type="PRINTS" id="PR00123">
    <property type="entry name" value="ATPASEA"/>
</dbReference>
<dbReference type="SUPFAM" id="SSF81336">
    <property type="entry name" value="F1F0 ATP synthase subunit A"/>
    <property type="match status" value="1"/>
</dbReference>
<dbReference type="PROSITE" id="PS00449">
    <property type="entry name" value="ATPASE_A"/>
    <property type="match status" value="1"/>
</dbReference>
<sequence length="226" mass="24648">MNENLFTSFATPTILGLPAAVPIILFPSLLIPTSKYLINNRLITTQQWLIQLTLKQMMTMHNTKGRTWSLMLISLITFIATTNLLGLLPHSFTPTTQLSMNLAMAIPLWAGTVATGFRLKAKNTLAHLLPQGTPTPLIPMLIIIETISLFIQPVALAVRLTANITAGHLLMHLIGAATMALSTISLPATPIIFTVLTLLTTLEIAVALIQAYVFTLLVSLYLHDNT</sequence>
<gene>
    <name evidence="1" type="primary">MT-ATP6</name>
    <name type="synonym">ATP6</name>
    <name type="synonym">ATPASE6</name>
    <name type="synonym">MTATP6</name>
</gene>
<geneLocation type="mitochondrion"/>
<feature type="chain" id="PRO_0000082129" description="ATP synthase F(0) complex subunit a">
    <location>
        <begin position="1"/>
        <end position="226"/>
    </location>
</feature>
<feature type="transmembrane region" description="Helical" evidence="2">
    <location>
        <begin position="12"/>
        <end position="32"/>
    </location>
</feature>
<feature type="transmembrane region" description="Helical" evidence="2">
    <location>
        <begin position="68"/>
        <end position="88"/>
    </location>
</feature>
<feature type="transmembrane region" description="Helical" evidence="2">
    <location>
        <begin position="97"/>
        <end position="117"/>
    </location>
</feature>
<feature type="transmembrane region" description="Helical" evidence="2">
    <location>
        <begin position="138"/>
        <end position="158"/>
    </location>
</feature>
<feature type="transmembrane region" description="Helical" evidence="2">
    <location>
        <begin position="164"/>
        <end position="184"/>
    </location>
</feature>
<feature type="transmembrane region" description="Helical" evidence="2">
    <location>
        <begin position="200"/>
        <end position="222"/>
    </location>
</feature>
<keyword id="KW-0066">ATP synthesis</keyword>
<keyword id="KW-0138">CF(0)</keyword>
<keyword id="KW-0375">Hydrogen ion transport</keyword>
<keyword id="KW-0406">Ion transport</keyword>
<keyword id="KW-0472">Membrane</keyword>
<keyword id="KW-0496">Mitochondrion</keyword>
<keyword id="KW-0999">Mitochondrion inner membrane</keyword>
<keyword id="KW-0812">Transmembrane</keyword>
<keyword id="KW-1133">Transmembrane helix</keyword>
<keyword id="KW-0813">Transport</keyword>
<protein>
    <recommendedName>
        <fullName evidence="1">ATP synthase F(0) complex subunit a</fullName>
    </recommendedName>
    <alternativeName>
        <fullName>F-ATPase protein 6</fullName>
    </alternativeName>
    <alternativeName>
        <fullName evidence="1">Proton-conducting channel, ATP synthase F(0) complex subunit a</fullName>
    </alternativeName>
</protein>
<proteinExistence type="inferred from homology"/>
<name>ATP6_HYLLA</name>
<comment type="function">
    <text evidence="1">Subunit a, of the mitochondrial membrane ATP synthase complex (F(1)F(0) ATP synthase or Complex V) that produces ATP from ADP in the presence of a proton gradient across the membrane which is generated by electron transport complexes of the respiratory chain. ATP synthase complex consist of a soluble F(1) head domain - the catalytic core - and a membrane F(1) domain - the membrane proton channel. These two domains are linked by a central stalk rotating inside the F(1) region and a stationary peripheral stalk. During catalysis, ATP synthesis in the catalytic domain of F(1) is coupled via a rotary mechanism of the central stalk subunits to proton translocation. With the subunit c (ATP5MC1), forms the proton-conducting channel in the F(0) domain, that contains two crucial half-channels (inlet and outlet) that facilitate proton movement from the mitochondrial intermembrane space (IMS) into the matrix. Protons are taken up via the inlet half-channel and released through the outlet half-channel, following a Grotthuss mechanism.</text>
</comment>
<comment type="catalytic activity">
    <reaction evidence="1">
        <text>H(+)(in) = H(+)(out)</text>
        <dbReference type="Rhea" id="RHEA:34979"/>
        <dbReference type="ChEBI" id="CHEBI:15378"/>
    </reaction>
</comment>
<comment type="subunit">
    <text evidence="1">Component of the ATP synthase complex composed at least of ATP5F1A/subunit alpha, ATP5F1B/subunit beta, ATP5MC1/subunit c (homooctomer), MT-ATP6/subunit a, MT-ATP8/subunit 8, ATP5ME/subunit e, ATP5MF/subunit f, ATP5MG/subunit g, ATP5MK/subunit k, ATP5MJ/subunit j, ATP5F1C/subunit gamma, ATP5F1D/subunit delta, ATP5F1E/subunit epsilon, ATP5PF/subunit F6, ATP5PB/subunit b, ATP5PD/subunit d, ATP5PO/subunit OSCP. ATP synthase complex consists of a soluble F(1) head domain (subunits alpha(3) and beta(3)) - the catalytic core - and a membrane F(0) domain - the membrane proton channel (subunits c, a, 8, e, f, g, k and j). These two domains are linked by a central stalk (subunits gamma, delta, and epsilon) rotating inside the F1 region and a stationary peripheral stalk (subunits F6, b, d, and OSCP). Interacts with DNAJC30; interaction is direct.</text>
</comment>
<comment type="subcellular location">
    <subcellularLocation>
        <location>Mitochondrion inner membrane</location>
        <topology>Multi-pass membrane protein</topology>
    </subcellularLocation>
</comment>
<comment type="similarity">
    <text evidence="3">Belongs to the ATPase A chain family.</text>
</comment>